<protein>
    <recommendedName>
        <fullName evidence="4">SPI-1 type 3 secretion system translocon protein SctB</fullName>
        <shortName evidence="4">SPI-1 T3SS translocon protein SctB</shortName>
    </recommendedName>
    <alternativeName>
        <fullName>Cell invasion protein SipC</fullName>
    </alternativeName>
    <alternativeName>
        <fullName>Effector protein SipC</fullName>
    </alternativeName>
</protein>
<accession>D0ZV21</accession>
<comment type="function">
    <text evidence="1">Component of the type III secretion system 1 (SPI-1 T3SS), also called injectisome, which is used to inject bacterial effector proteins into eukaryotic host cells (By similarity). SipB/SctE1 and SipC/SctB1 are inserted into the host membrane where they form a pore and allow the translocation of effector proteins into the cytosol of target cells (By similarity).</text>
</comment>
<comment type="subunit">
    <text evidence="1">The core secretion machinery of the T3SS is composed of approximately 20 different proteins, including cytoplasmic components, a base, an export apparatus and a needle (By similarity). This subunit is involved in the formation of a pore, called the translocon, in host membrane (By similarity).</text>
</comment>
<comment type="subcellular location">
    <subcellularLocation>
        <location evidence="3">Secreted</location>
    </subcellularLocation>
    <subcellularLocation>
        <location evidence="1">Host membrane</location>
        <topology evidence="2">Single-pass membrane protein</topology>
    </subcellularLocation>
    <text evidence="1">Secreted via the type III secretion system 1 (SPI-1 T3SS).</text>
</comment>
<comment type="similarity">
    <text evidence="4">Belongs to the SctB/SipC family.</text>
</comment>
<sequence>MLISNVGINPAAYLNNHSVENSSQTASQSVSAKDILNSIGISSSKVSDLGLSPTLSAPAPGVLTQTPGTITSFLKASIQNTDMNQDLNALANNVTTKANEVVQTQLREQQAEVGKFFDISGMSSSAVALLAAANTLMLTLNQADSKLSGKLSLVSFDAAKTTASSMMREGMNALSGSISQSALQLGITGVGAKLEYKGLQNERGALKHNAAKIDKLTTESHSIKNVLNGQNSVKLGAEGVDSLKSLNMKKTGTDATKNLNDATLKSNAGTSATESLGIKDSNKQISPEHQAILSKRLESVESDIRLEQNTMDMTRIDARKMQMTGDLIMKNSVTVGGIAGASGQYAATQERSEQQISQVNNRVASTASDEARESSRKSTSLIQEMLKTMESINQSKASALAAIAGNIRA</sequence>
<reference key="1">
    <citation type="journal article" date="2010" name="J. Bacteriol.">
        <title>Short-term signatures of evolutionary change in the Salmonella enterica serovar typhimurium 14028 genome.</title>
        <authorList>
            <person name="Jarvik T."/>
            <person name="Smillie C."/>
            <person name="Groisman E.A."/>
            <person name="Ochman H."/>
        </authorList>
    </citation>
    <scope>NUCLEOTIDE SEQUENCE [LARGE SCALE GENOMIC DNA]</scope>
    <source>
        <strain>14028s / SGSC 2262</strain>
    </source>
</reference>
<reference key="2">
    <citation type="journal article" date="2000" name="Mol. Microbiol.">
        <title>The Salmonella type III secretion translocon protein SspC is inserted into the epithelial cell plasma membrane upon infection.</title>
        <authorList>
            <person name="Scherer C.A."/>
            <person name="Cooper E."/>
            <person name="Miller S.I."/>
        </authorList>
    </citation>
    <scope>SUBCELLULAR LOCATION</scope>
    <source>
        <strain>ATCC 14028s / SGSG 2262</strain>
    </source>
</reference>
<proteinExistence type="inferred from homology"/>
<dbReference type="EMBL" id="CP001363">
    <property type="protein sequence ID" value="ACY89897.1"/>
    <property type="molecule type" value="Genomic_DNA"/>
</dbReference>
<dbReference type="RefSeq" id="WP_000909019.1">
    <property type="nucleotide sequence ID" value="NZ_CP043402.1"/>
</dbReference>
<dbReference type="KEGG" id="seo:STM14_3483"/>
<dbReference type="PATRIC" id="fig|588858.6.peg.3204"/>
<dbReference type="HOGENOM" id="CLU_055996_0_0_6"/>
<dbReference type="BioCyc" id="SENT588858:STM14_RS15460-MONOMER"/>
<dbReference type="PHI-base" id="PHI:3735"/>
<dbReference type="Proteomes" id="UP000002695">
    <property type="component" value="Chromosome"/>
</dbReference>
<dbReference type="GO" id="GO:0005576">
    <property type="term" value="C:extracellular region"/>
    <property type="evidence" value="ECO:0007669"/>
    <property type="project" value="UniProtKB-SubCell"/>
</dbReference>
<dbReference type="GO" id="GO:0033644">
    <property type="term" value="C:host cell membrane"/>
    <property type="evidence" value="ECO:0007669"/>
    <property type="project" value="UniProtKB-SubCell"/>
</dbReference>
<dbReference type="GO" id="GO:0016020">
    <property type="term" value="C:membrane"/>
    <property type="evidence" value="ECO:0007669"/>
    <property type="project" value="UniProtKB-KW"/>
</dbReference>
<dbReference type="GO" id="GO:1903829">
    <property type="term" value="P:positive regulation of protein localization"/>
    <property type="evidence" value="ECO:0000250"/>
    <property type="project" value="UniProtKB"/>
</dbReference>
<dbReference type="InterPro" id="IPR005427">
    <property type="entry name" value="BipC/SctB"/>
</dbReference>
<dbReference type="NCBIfam" id="TIGR02101">
    <property type="entry name" value="IpaC_SipC"/>
    <property type="match status" value="1"/>
</dbReference>
<dbReference type="NCBIfam" id="NF011900">
    <property type="entry name" value="PRK15373.1"/>
    <property type="match status" value="1"/>
</dbReference>
<dbReference type="NCBIfam" id="NF038055">
    <property type="entry name" value="T3SS_SctB_pilot"/>
    <property type="match status" value="1"/>
</dbReference>
<dbReference type="Pfam" id="PF09599">
    <property type="entry name" value="IpaC_SipC"/>
    <property type="match status" value="1"/>
</dbReference>
<dbReference type="PRINTS" id="PR01608">
    <property type="entry name" value="BACINVASINC"/>
</dbReference>
<name>SCTB1_SALT1</name>
<feature type="chain" id="PRO_0000406082" description="SPI-1 type 3 secretion system translocon protein SctB">
    <location>
        <begin position="1"/>
        <end position="409"/>
    </location>
</feature>
<feature type="transmembrane region" description="Helical" evidence="2">
    <location>
        <begin position="119"/>
        <end position="140"/>
    </location>
</feature>
<organism>
    <name type="scientific">Salmonella typhimurium (strain 14028s / SGSC 2262)</name>
    <dbReference type="NCBI Taxonomy" id="588858"/>
    <lineage>
        <taxon>Bacteria</taxon>
        <taxon>Pseudomonadati</taxon>
        <taxon>Pseudomonadota</taxon>
        <taxon>Gammaproteobacteria</taxon>
        <taxon>Enterobacterales</taxon>
        <taxon>Enterobacteriaceae</taxon>
        <taxon>Salmonella</taxon>
    </lineage>
</organism>
<gene>
    <name evidence="1" type="primary">sctB1</name>
    <name type="synonym">sipC</name>
    <name type="ordered locus">STM14_3483</name>
</gene>
<keyword id="KW-1043">Host membrane</keyword>
<keyword id="KW-0472">Membrane</keyword>
<keyword id="KW-0964">Secreted</keyword>
<keyword id="KW-0812">Transmembrane</keyword>
<keyword id="KW-1133">Transmembrane helix</keyword>
<keyword id="KW-0843">Virulence</keyword>
<evidence type="ECO:0000250" key="1">
    <source>
        <dbReference type="UniProtKB" id="P0CL47"/>
    </source>
</evidence>
<evidence type="ECO:0000255" key="2"/>
<evidence type="ECO:0000269" key="3">
    <source>
    </source>
</evidence>
<evidence type="ECO:0000305" key="4"/>